<reference key="1">
    <citation type="journal article" date="2005" name="J. Bacteriol.">
        <title>Insights into genome plasticity and pathogenicity of the plant pathogenic Bacterium Xanthomonas campestris pv. vesicatoria revealed by the complete genome sequence.</title>
        <authorList>
            <person name="Thieme F."/>
            <person name="Koebnik R."/>
            <person name="Bekel T."/>
            <person name="Berger C."/>
            <person name="Boch J."/>
            <person name="Buettner D."/>
            <person name="Caldana C."/>
            <person name="Gaigalat L."/>
            <person name="Goesmann A."/>
            <person name="Kay S."/>
            <person name="Kirchner O."/>
            <person name="Lanz C."/>
            <person name="Linke B."/>
            <person name="McHardy A.C."/>
            <person name="Meyer F."/>
            <person name="Mittenhuber G."/>
            <person name="Nies D.H."/>
            <person name="Niesbach-Kloesgen U."/>
            <person name="Patschkowski T."/>
            <person name="Rueckert C."/>
            <person name="Rupp O."/>
            <person name="Schneiker S."/>
            <person name="Schuster S.C."/>
            <person name="Vorhoelter F.J."/>
            <person name="Weber E."/>
            <person name="Puehler A."/>
            <person name="Bonas U."/>
            <person name="Bartels D."/>
            <person name="Kaiser O."/>
        </authorList>
    </citation>
    <scope>NUCLEOTIDE SEQUENCE [LARGE SCALE GENOMIC DNA]</scope>
    <source>
        <strain>85-10</strain>
    </source>
</reference>
<gene>
    <name evidence="1" type="primary">dnaJ</name>
    <name type="ordered locus">XCV1565</name>
</gene>
<organism>
    <name type="scientific">Xanthomonas euvesicatoria pv. vesicatoria (strain 85-10)</name>
    <name type="common">Xanthomonas campestris pv. vesicatoria</name>
    <dbReference type="NCBI Taxonomy" id="316273"/>
    <lineage>
        <taxon>Bacteria</taxon>
        <taxon>Pseudomonadati</taxon>
        <taxon>Pseudomonadota</taxon>
        <taxon>Gammaproteobacteria</taxon>
        <taxon>Lysobacterales</taxon>
        <taxon>Lysobacteraceae</taxon>
        <taxon>Xanthomonas</taxon>
    </lineage>
</organism>
<feature type="chain" id="PRO_1000085329" description="Chaperone protein DnaJ">
    <location>
        <begin position="1"/>
        <end position="375"/>
    </location>
</feature>
<feature type="domain" description="J" evidence="1">
    <location>
        <begin position="5"/>
        <end position="70"/>
    </location>
</feature>
<feature type="repeat" description="CXXCXGXG motif">
    <location>
        <begin position="144"/>
        <end position="151"/>
    </location>
</feature>
<feature type="repeat" description="CXXCXGXG motif">
    <location>
        <begin position="160"/>
        <end position="167"/>
    </location>
</feature>
<feature type="repeat" description="CXXCXGXG motif">
    <location>
        <begin position="182"/>
        <end position="189"/>
    </location>
</feature>
<feature type="repeat" description="CXXCXGXG motif">
    <location>
        <begin position="196"/>
        <end position="203"/>
    </location>
</feature>
<feature type="zinc finger region" description="CR-type" evidence="1">
    <location>
        <begin position="131"/>
        <end position="208"/>
    </location>
</feature>
<feature type="binding site" evidence="1">
    <location>
        <position position="144"/>
    </location>
    <ligand>
        <name>Zn(2+)</name>
        <dbReference type="ChEBI" id="CHEBI:29105"/>
        <label>1</label>
    </ligand>
</feature>
<feature type="binding site" evidence="1">
    <location>
        <position position="147"/>
    </location>
    <ligand>
        <name>Zn(2+)</name>
        <dbReference type="ChEBI" id="CHEBI:29105"/>
        <label>1</label>
    </ligand>
</feature>
<feature type="binding site" evidence="1">
    <location>
        <position position="160"/>
    </location>
    <ligand>
        <name>Zn(2+)</name>
        <dbReference type="ChEBI" id="CHEBI:29105"/>
        <label>2</label>
    </ligand>
</feature>
<feature type="binding site" evidence="1">
    <location>
        <position position="163"/>
    </location>
    <ligand>
        <name>Zn(2+)</name>
        <dbReference type="ChEBI" id="CHEBI:29105"/>
        <label>2</label>
    </ligand>
</feature>
<feature type="binding site" evidence="1">
    <location>
        <position position="182"/>
    </location>
    <ligand>
        <name>Zn(2+)</name>
        <dbReference type="ChEBI" id="CHEBI:29105"/>
        <label>2</label>
    </ligand>
</feature>
<feature type="binding site" evidence="1">
    <location>
        <position position="185"/>
    </location>
    <ligand>
        <name>Zn(2+)</name>
        <dbReference type="ChEBI" id="CHEBI:29105"/>
        <label>2</label>
    </ligand>
</feature>
<feature type="binding site" evidence="1">
    <location>
        <position position="196"/>
    </location>
    <ligand>
        <name>Zn(2+)</name>
        <dbReference type="ChEBI" id="CHEBI:29105"/>
        <label>1</label>
    </ligand>
</feature>
<feature type="binding site" evidence="1">
    <location>
        <position position="199"/>
    </location>
    <ligand>
        <name>Zn(2+)</name>
        <dbReference type="ChEBI" id="CHEBI:29105"/>
        <label>1</label>
    </ligand>
</feature>
<keyword id="KW-0143">Chaperone</keyword>
<keyword id="KW-0963">Cytoplasm</keyword>
<keyword id="KW-0235">DNA replication</keyword>
<keyword id="KW-0479">Metal-binding</keyword>
<keyword id="KW-0677">Repeat</keyword>
<keyword id="KW-0346">Stress response</keyword>
<keyword id="KW-0862">Zinc</keyword>
<keyword id="KW-0863">Zinc-finger</keyword>
<comment type="function">
    <text evidence="1">Participates actively in the response to hyperosmotic and heat shock by preventing the aggregation of stress-denatured proteins and by disaggregating proteins, also in an autonomous, DnaK-independent fashion. Unfolded proteins bind initially to DnaJ; upon interaction with the DnaJ-bound protein, DnaK hydrolyzes its bound ATP, resulting in the formation of a stable complex. GrpE releases ADP from DnaK; ATP binding to DnaK triggers the release of the substrate protein, thus completing the reaction cycle. Several rounds of ATP-dependent interactions between DnaJ, DnaK and GrpE are required for fully efficient folding. Also involved, together with DnaK and GrpE, in the DNA replication of plasmids through activation of initiation proteins.</text>
</comment>
<comment type="cofactor">
    <cofactor evidence="1">
        <name>Zn(2+)</name>
        <dbReference type="ChEBI" id="CHEBI:29105"/>
    </cofactor>
    <text evidence="1">Binds 2 Zn(2+) ions per monomer.</text>
</comment>
<comment type="subunit">
    <text evidence="1">Homodimer.</text>
</comment>
<comment type="subcellular location">
    <subcellularLocation>
        <location evidence="1">Cytoplasm</location>
    </subcellularLocation>
</comment>
<comment type="domain">
    <text evidence="1">The J domain is necessary and sufficient to stimulate DnaK ATPase activity. Zinc center 1 plays an important role in the autonomous, DnaK-independent chaperone activity of DnaJ. Zinc center 2 is essential for interaction with DnaK and for DnaJ activity.</text>
</comment>
<comment type="similarity">
    <text evidence="1">Belongs to the DnaJ family.</text>
</comment>
<dbReference type="EMBL" id="AM039952">
    <property type="protein sequence ID" value="CAJ23197.1"/>
    <property type="molecule type" value="Genomic_DNA"/>
</dbReference>
<dbReference type="RefSeq" id="WP_008577236.1">
    <property type="nucleotide sequence ID" value="NZ_CP017190.1"/>
</dbReference>
<dbReference type="SMR" id="Q3BVB7"/>
<dbReference type="STRING" id="456327.BJD11_14805"/>
<dbReference type="GeneID" id="97509899"/>
<dbReference type="KEGG" id="xcv:XCV1565"/>
<dbReference type="eggNOG" id="COG0484">
    <property type="taxonomic scope" value="Bacteria"/>
</dbReference>
<dbReference type="HOGENOM" id="CLU_017633_0_7_6"/>
<dbReference type="Proteomes" id="UP000007069">
    <property type="component" value="Chromosome"/>
</dbReference>
<dbReference type="GO" id="GO:0005737">
    <property type="term" value="C:cytoplasm"/>
    <property type="evidence" value="ECO:0007669"/>
    <property type="project" value="UniProtKB-SubCell"/>
</dbReference>
<dbReference type="GO" id="GO:0005524">
    <property type="term" value="F:ATP binding"/>
    <property type="evidence" value="ECO:0007669"/>
    <property type="project" value="InterPro"/>
</dbReference>
<dbReference type="GO" id="GO:0031072">
    <property type="term" value="F:heat shock protein binding"/>
    <property type="evidence" value="ECO:0007669"/>
    <property type="project" value="InterPro"/>
</dbReference>
<dbReference type="GO" id="GO:0051082">
    <property type="term" value="F:unfolded protein binding"/>
    <property type="evidence" value="ECO:0007669"/>
    <property type="project" value="UniProtKB-UniRule"/>
</dbReference>
<dbReference type="GO" id="GO:0008270">
    <property type="term" value="F:zinc ion binding"/>
    <property type="evidence" value="ECO:0007669"/>
    <property type="project" value="UniProtKB-UniRule"/>
</dbReference>
<dbReference type="GO" id="GO:0051085">
    <property type="term" value="P:chaperone cofactor-dependent protein refolding"/>
    <property type="evidence" value="ECO:0007669"/>
    <property type="project" value="TreeGrafter"/>
</dbReference>
<dbReference type="GO" id="GO:0006260">
    <property type="term" value="P:DNA replication"/>
    <property type="evidence" value="ECO:0007669"/>
    <property type="project" value="UniProtKB-KW"/>
</dbReference>
<dbReference type="GO" id="GO:0042026">
    <property type="term" value="P:protein refolding"/>
    <property type="evidence" value="ECO:0007669"/>
    <property type="project" value="TreeGrafter"/>
</dbReference>
<dbReference type="GO" id="GO:0009408">
    <property type="term" value="P:response to heat"/>
    <property type="evidence" value="ECO:0007669"/>
    <property type="project" value="InterPro"/>
</dbReference>
<dbReference type="CDD" id="cd06257">
    <property type="entry name" value="DnaJ"/>
    <property type="match status" value="1"/>
</dbReference>
<dbReference type="CDD" id="cd10747">
    <property type="entry name" value="DnaJ_C"/>
    <property type="match status" value="1"/>
</dbReference>
<dbReference type="CDD" id="cd10719">
    <property type="entry name" value="DnaJ_zf"/>
    <property type="match status" value="1"/>
</dbReference>
<dbReference type="FunFam" id="2.10.230.10:FF:000002">
    <property type="entry name" value="Molecular chaperone DnaJ"/>
    <property type="match status" value="1"/>
</dbReference>
<dbReference type="FunFam" id="2.60.260.20:FF:000004">
    <property type="entry name" value="Molecular chaperone DnaJ"/>
    <property type="match status" value="1"/>
</dbReference>
<dbReference type="Gene3D" id="1.10.287.110">
    <property type="entry name" value="DnaJ domain"/>
    <property type="match status" value="1"/>
</dbReference>
<dbReference type="Gene3D" id="2.10.230.10">
    <property type="entry name" value="Heat shock protein DnaJ, cysteine-rich domain"/>
    <property type="match status" value="1"/>
</dbReference>
<dbReference type="Gene3D" id="2.60.260.20">
    <property type="entry name" value="Urease metallochaperone UreE, N-terminal domain"/>
    <property type="match status" value="2"/>
</dbReference>
<dbReference type="HAMAP" id="MF_01152">
    <property type="entry name" value="DnaJ"/>
    <property type="match status" value="1"/>
</dbReference>
<dbReference type="InterPro" id="IPR012724">
    <property type="entry name" value="DnaJ"/>
</dbReference>
<dbReference type="InterPro" id="IPR002939">
    <property type="entry name" value="DnaJ_C"/>
</dbReference>
<dbReference type="InterPro" id="IPR001623">
    <property type="entry name" value="DnaJ_domain"/>
</dbReference>
<dbReference type="InterPro" id="IPR008971">
    <property type="entry name" value="HSP40/DnaJ_pept-bd"/>
</dbReference>
<dbReference type="InterPro" id="IPR001305">
    <property type="entry name" value="HSP_DnaJ_Cys-rich_dom"/>
</dbReference>
<dbReference type="InterPro" id="IPR036410">
    <property type="entry name" value="HSP_DnaJ_Cys-rich_dom_sf"/>
</dbReference>
<dbReference type="InterPro" id="IPR036869">
    <property type="entry name" value="J_dom_sf"/>
</dbReference>
<dbReference type="NCBIfam" id="TIGR02349">
    <property type="entry name" value="DnaJ_bact"/>
    <property type="match status" value="1"/>
</dbReference>
<dbReference type="NCBIfam" id="NF008035">
    <property type="entry name" value="PRK10767.1"/>
    <property type="match status" value="1"/>
</dbReference>
<dbReference type="PANTHER" id="PTHR43096:SF48">
    <property type="entry name" value="CHAPERONE PROTEIN DNAJ"/>
    <property type="match status" value="1"/>
</dbReference>
<dbReference type="PANTHER" id="PTHR43096">
    <property type="entry name" value="DNAJ HOMOLOG 1, MITOCHONDRIAL-RELATED"/>
    <property type="match status" value="1"/>
</dbReference>
<dbReference type="Pfam" id="PF00226">
    <property type="entry name" value="DnaJ"/>
    <property type="match status" value="1"/>
</dbReference>
<dbReference type="Pfam" id="PF01556">
    <property type="entry name" value="DnaJ_C"/>
    <property type="match status" value="1"/>
</dbReference>
<dbReference type="Pfam" id="PF00684">
    <property type="entry name" value="DnaJ_CXXCXGXG"/>
    <property type="match status" value="1"/>
</dbReference>
<dbReference type="PRINTS" id="PR00625">
    <property type="entry name" value="JDOMAIN"/>
</dbReference>
<dbReference type="SMART" id="SM00271">
    <property type="entry name" value="DnaJ"/>
    <property type="match status" value="1"/>
</dbReference>
<dbReference type="SUPFAM" id="SSF46565">
    <property type="entry name" value="Chaperone J-domain"/>
    <property type="match status" value="1"/>
</dbReference>
<dbReference type="SUPFAM" id="SSF57938">
    <property type="entry name" value="DnaJ/Hsp40 cysteine-rich domain"/>
    <property type="match status" value="1"/>
</dbReference>
<dbReference type="SUPFAM" id="SSF49493">
    <property type="entry name" value="HSP40/DnaJ peptide-binding domain"/>
    <property type="match status" value="2"/>
</dbReference>
<dbReference type="PROSITE" id="PS50076">
    <property type="entry name" value="DNAJ_2"/>
    <property type="match status" value="1"/>
</dbReference>
<dbReference type="PROSITE" id="PS51188">
    <property type="entry name" value="ZF_CR"/>
    <property type="match status" value="1"/>
</dbReference>
<accession>Q3BVB7</accession>
<protein>
    <recommendedName>
        <fullName evidence="1">Chaperone protein DnaJ</fullName>
    </recommendedName>
</protein>
<sequence>MSKRDYYEVLGVARGASDEELKKAYRRCAMKHHPDRNPGDAAAEAAFKECKEAYEVLSDGNKRRAYDAHGHAAFEHGMGGGGGPGGPDMGDIFGDIFGNIFGGGAAGPRAARRGADVGYVLELDLEEAVAGIERRIEIPTLVECAPCHGSGSEDGKVETCGTCHGRGQVRIQRGIFAMQQSCPHCDGRGTLIQNPCKTCHGAGRVEEDKVLSIKVPAGVDTGDRIRLAGEGEAGPAGTPPGDLYVEVRVREHAIFQRDGDDLHCEVPIRISQAALGDTVRVATLGGEAEIRIPAETQTGKLFRLRGKGVRSVRSRSEGDLYCRVVVETPVNLTADQRELLQQFEATFTGEDARKHSPKSATFIDGVKGFWDRMTS</sequence>
<name>DNAJ_XANE5</name>
<evidence type="ECO:0000255" key="1">
    <source>
        <dbReference type="HAMAP-Rule" id="MF_01152"/>
    </source>
</evidence>
<proteinExistence type="inferred from homology"/>